<reference key="1">
    <citation type="journal article" date="2002" name="Curr. Biol.">
        <title>GTP binding induces filament assembly of a recombinant septin.</title>
        <authorList>
            <person name="Mendoza M."/>
            <person name="Hyman A.A."/>
            <person name="Glotzer M."/>
        </authorList>
    </citation>
    <scope>NUCLEOTIDE SEQUENCE [MRNA]</scope>
    <scope>SUBUNIT</scope>
    <source>
        <tissue>Kidney</tissue>
    </source>
</reference>
<reference key="2">
    <citation type="submission" date="2006-10" db="EMBL/GenBank/DDBJ databases">
        <authorList>
            <consortium name="NIH - Xenopus Gene Collection (XGC) project"/>
        </authorList>
    </citation>
    <scope>NUCLEOTIDE SEQUENCE [LARGE SCALE MRNA]</scope>
    <source>
        <tissue>Ovary</tissue>
    </source>
</reference>
<reference key="3">
    <citation type="journal article" date="2010" name="Science">
        <title>Planar cell polarity acts through septins to control collective cell movement and ciliogenesis.</title>
        <authorList>
            <person name="Kim S.K."/>
            <person name="Shindo A."/>
            <person name="Park T.J."/>
            <person name="Oh E.C."/>
            <person name="Ghosh S."/>
            <person name="Gray R.S."/>
            <person name="Lewis R.A."/>
            <person name="Johnson C.A."/>
            <person name="Attie-Bittach T."/>
            <person name="Katsanis N."/>
            <person name="Wallingford J.B."/>
        </authorList>
    </citation>
    <scope>FUNCTION</scope>
    <scope>SUBCELLULAR LOCATION</scope>
    <scope>INTERACTION WITH WDPCP</scope>
</reference>
<accession>Q9DE33</accession>
<accession>A0JMX2</accession>
<proteinExistence type="evidence at protein level"/>
<name>SEP2A_XENLA</name>
<gene>
    <name type="primary">sept2-a</name>
    <name type="synonym">septa</name>
</gene>
<keyword id="KW-0131">Cell cycle</keyword>
<keyword id="KW-0132">Cell division</keyword>
<keyword id="KW-1003">Cell membrane</keyword>
<keyword id="KW-0966">Cell projection</keyword>
<keyword id="KW-0963">Cytoplasm</keyword>
<keyword id="KW-0206">Cytoskeleton</keyword>
<keyword id="KW-0342">GTP-binding</keyword>
<keyword id="KW-0472">Membrane</keyword>
<keyword id="KW-0498">Mitosis</keyword>
<keyword id="KW-0547">Nucleotide-binding</keyword>
<keyword id="KW-1185">Reference proteome</keyword>
<dbReference type="EMBL" id="AF212298">
    <property type="protein sequence ID" value="AAG43543.1"/>
    <property type="molecule type" value="mRNA"/>
</dbReference>
<dbReference type="EMBL" id="BC126037">
    <property type="protein sequence ID" value="AAI26038.1"/>
    <property type="status" value="ALT_TERM"/>
    <property type="molecule type" value="mRNA"/>
</dbReference>
<dbReference type="SMR" id="Q9DE33"/>
<dbReference type="BioGRID" id="99538">
    <property type="interactions" value="1"/>
</dbReference>
<dbReference type="IntAct" id="Q9DE33">
    <property type="interactions" value="1"/>
</dbReference>
<dbReference type="GeneID" id="398203"/>
<dbReference type="KEGG" id="xla:398203"/>
<dbReference type="AGR" id="Xenbase:XB-GENE-865354"/>
<dbReference type="CTD" id="398203"/>
<dbReference type="Xenbase" id="XB-GENE-865354">
    <property type="gene designation" value="septin2.L"/>
</dbReference>
<dbReference type="OMA" id="AINCRDX"/>
<dbReference type="OrthoDB" id="416553at2759"/>
<dbReference type="Proteomes" id="UP000186698">
    <property type="component" value="Chromosome 5L"/>
</dbReference>
<dbReference type="Bgee" id="398203">
    <property type="expression patterns" value="Expressed in spleen and 19 other cell types or tissues"/>
</dbReference>
<dbReference type="GO" id="GO:0032153">
    <property type="term" value="C:cell division site"/>
    <property type="evidence" value="ECO:0000318"/>
    <property type="project" value="GO_Central"/>
</dbReference>
<dbReference type="GO" id="GO:0060170">
    <property type="term" value="C:ciliary membrane"/>
    <property type="evidence" value="ECO:0000250"/>
    <property type="project" value="UniProtKB"/>
</dbReference>
<dbReference type="GO" id="GO:0032154">
    <property type="term" value="C:cleavage furrow"/>
    <property type="evidence" value="ECO:0007669"/>
    <property type="project" value="UniProtKB-SubCell"/>
</dbReference>
<dbReference type="GO" id="GO:0005737">
    <property type="term" value="C:cytoplasm"/>
    <property type="evidence" value="ECO:0000314"/>
    <property type="project" value="UniProtKB"/>
</dbReference>
<dbReference type="GO" id="GO:0015630">
    <property type="term" value="C:microtubule cytoskeleton"/>
    <property type="evidence" value="ECO:0000318"/>
    <property type="project" value="GO_Central"/>
</dbReference>
<dbReference type="GO" id="GO:0030496">
    <property type="term" value="C:midbody"/>
    <property type="evidence" value="ECO:0007669"/>
    <property type="project" value="UniProtKB-SubCell"/>
</dbReference>
<dbReference type="GO" id="GO:0031105">
    <property type="term" value="C:septin complex"/>
    <property type="evidence" value="ECO:0000318"/>
    <property type="project" value="GO_Central"/>
</dbReference>
<dbReference type="GO" id="GO:0005940">
    <property type="term" value="C:septin ring"/>
    <property type="evidence" value="ECO:0000318"/>
    <property type="project" value="GO_Central"/>
</dbReference>
<dbReference type="GO" id="GO:0005819">
    <property type="term" value="C:spindle"/>
    <property type="evidence" value="ECO:0007669"/>
    <property type="project" value="UniProtKB-SubCell"/>
</dbReference>
<dbReference type="GO" id="GO:0005525">
    <property type="term" value="F:GTP binding"/>
    <property type="evidence" value="ECO:0007669"/>
    <property type="project" value="UniProtKB-KW"/>
</dbReference>
<dbReference type="GO" id="GO:0003924">
    <property type="term" value="F:GTPase activity"/>
    <property type="evidence" value="ECO:0000318"/>
    <property type="project" value="GO_Central"/>
</dbReference>
<dbReference type="GO" id="GO:0060090">
    <property type="term" value="F:molecular adaptor activity"/>
    <property type="evidence" value="ECO:0000318"/>
    <property type="project" value="GO_Central"/>
</dbReference>
<dbReference type="GO" id="GO:0060271">
    <property type="term" value="P:cilium assembly"/>
    <property type="evidence" value="ECO:0000250"/>
    <property type="project" value="UniProtKB"/>
</dbReference>
<dbReference type="GO" id="GO:0061640">
    <property type="term" value="P:cytoskeleton-dependent cytokinesis"/>
    <property type="evidence" value="ECO:0000318"/>
    <property type="project" value="GO_Central"/>
</dbReference>
<dbReference type="GO" id="GO:0008104">
    <property type="term" value="P:protein localization"/>
    <property type="evidence" value="ECO:0000318"/>
    <property type="project" value="GO_Central"/>
</dbReference>
<dbReference type="GO" id="GO:0007224">
    <property type="term" value="P:smoothened signaling pathway"/>
    <property type="evidence" value="ECO:0000250"/>
    <property type="project" value="UniProtKB"/>
</dbReference>
<dbReference type="CDD" id="cd01850">
    <property type="entry name" value="CDC_Septin"/>
    <property type="match status" value="1"/>
</dbReference>
<dbReference type="FunFam" id="3.40.50.300:FF:000064">
    <property type="entry name" value="Septin 4"/>
    <property type="match status" value="1"/>
</dbReference>
<dbReference type="Gene3D" id="3.40.50.300">
    <property type="entry name" value="P-loop containing nucleotide triphosphate hydrolases"/>
    <property type="match status" value="1"/>
</dbReference>
<dbReference type="InterPro" id="IPR030379">
    <property type="entry name" value="G_SEPTIN_dom"/>
</dbReference>
<dbReference type="InterPro" id="IPR027417">
    <property type="entry name" value="P-loop_NTPase"/>
</dbReference>
<dbReference type="InterPro" id="IPR016491">
    <property type="entry name" value="Septin"/>
</dbReference>
<dbReference type="InterPro" id="IPR008113">
    <property type="entry name" value="Septin2"/>
</dbReference>
<dbReference type="PANTHER" id="PTHR18884">
    <property type="entry name" value="SEPTIN"/>
    <property type="match status" value="1"/>
</dbReference>
<dbReference type="Pfam" id="PF00735">
    <property type="entry name" value="Septin"/>
    <property type="match status" value="1"/>
</dbReference>
<dbReference type="PIRSF" id="PIRSF006698">
    <property type="entry name" value="Septin"/>
    <property type="match status" value="1"/>
</dbReference>
<dbReference type="PRINTS" id="PR01740">
    <property type="entry name" value="SEPTIN2"/>
</dbReference>
<dbReference type="SUPFAM" id="SSF52540">
    <property type="entry name" value="P-loop containing nucleoside triphosphate hydrolases"/>
    <property type="match status" value="1"/>
</dbReference>
<dbReference type="PROSITE" id="PS51719">
    <property type="entry name" value="G_SEPTIN"/>
    <property type="match status" value="1"/>
</dbReference>
<evidence type="ECO:0000250" key="1"/>
<evidence type="ECO:0000255" key="2">
    <source>
        <dbReference type="PROSITE-ProRule" id="PRU01056"/>
    </source>
</evidence>
<evidence type="ECO:0000269" key="3">
    <source>
    </source>
</evidence>
<evidence type="ECO:0000269" key="4">
    <source>
    </source>
</evidence>
<evidence type="ECO:0000305" key="5"/>
<protein>
    <recommendedName>
        <fullName>Septin-2A</fullName>
    </recommendedName>
    <alternativeName>
        <fullName>Septin-A</fullName>
        <shortName>XlSeptA</shortName>
    </alternativeName>
</protein>
<sequence length="356" mass="40928">MSKQQAQFTNPETPGYVGFANLPNQVHRKSVRKGFEFTLMVVGESGLGKSTLINSLFLTDLYPERVVPGAADKIERTVDIEASTVEIEERGVKLRLTVVDTPGYGDAMNCVDCFKPIISYVDNQFERYLHDESGLNRRHIVDNRVHCCFYFISPFGHGLKPLDVEFMKALHNKVNIVPVIAKADTLTLRERERLKRRVLDEIEEHGIKIYQLPDAESDEDEDFKEQTRLLKASIPFTVVGSNQLIEAKGKKVRGRLYPWGVVEVENTEHNDFLKLRTMLITHMQDLQEVTQDLHYENFRSERLKKGVTSSKVEHVEVTKDQILQEKEAELRRMQEMITRMQAQMQIQGQSGDAQHL</sequence>
<organism>
    <name type="scientific">Xenopus laevis</name>
    <name type="common">African clawed frog</name>
    <dbReference type="NCBI Taxonomy" id="8355"/>
    <lineage>
        <taxon>Eukaryota</taxon>
        <taxon>Metazoa</taxon>
        <taxon>Chordata</taxon>
        <taxon>Craniata</taxon>
        <taxon>Vertebrata</taxon>
        <taxon>Euteleostomi</taxon>
        <taxon>Amphibia</taxon>
        <taxon>Batrachia</taxon>
        <taxon>Anura</taxon>
        <taxon>Pipoidea</taxon>
        <taxon>Pipidae</taxon>
        <taxon>Xenopodinae</taxon>
        <taxon>Xenopus</taxon>
        <taxon>Xenopus</taxon>
    </lineage>
</organism>
<comment type="function">
    <text evidence="1 4">Filament-forming cytoskeletal GTPase. Required for normal organization of the actin cytoskeleton. Plays a role in the biogenesis of polarized columnar-shaped epithelium. Required for the progression through mitosis through regulation of chromosome congression. During anaphase, may be required for chromosome segregation and spindle elongation (By similarity). Probably plays a role in ciliogenesis and collective cell movements including convergent extension during gastrulation. In cilia, required for the integrity of the diffusion barrier at the base of the primary cilium that prevents diffusion of transmembrane proteins between the cilia and plasma membranes. Controls cell shape and not polarization of cells during convergent extension.</text>
</comment>
<comment type="subunit">
    <text evidence="3 4">Septins polymerize into heterooligomeric protein complexes that form filaments, and associate with cellular membranes, actin filaments and microtubules. GTPase activity is required for filament formation. Can form heterooligomers with other family members and form filaments. Interacts with wdpcp.</text>
</comment>
<comment type="subcellular location">
    <subcellularLocation>
        <location evidence="4">Cytoplasm</location>
    </subcellularLocation>
    <subcellularLocation>
        <location evidence="1">Cytoplasm</location>
        <location evidence="1">Cytoskeleton</location>
    </subcellularLocation>
    <subcellularLocation>
        <location evidence="1">Cytoplasm</location>
        <location evidence="1">Cytoskeleton</location>
        <location evidence="1">Spindle</location>
    </subcellularLocation>
    <subcellularLocation>
        <location evidence="1">Cleavage furrow</location>
    </subcellularLocation>
    <subcellularLocation>
        <location evidence="1">Midbody</location>
    </subcellularLocation>
    <subcellularLocation>
        <location evidence="1">Cell projection</location>
        <location evidence="1">Cilium membrane</location>
    </subcellularLocation>
    <text evidence="1">Localizes at the base of the cilia near the morphological distinction between the cilia and plasma membranes (By similarity). Cytoplasm, cell cortex.</text>
</comment>
<comment type="similarity">
    <text evidence="2">Belongs to the TRAFAC class TrmE-Era-EngA-EngB-Septin-like GTPase superfamily. Septin GTPase family.</text>
</comment>
<comment type="sequence caution" evidence="5">
    <conflict type="erroneous termination">
        <sequence resource="EMBL-CDS" id="AAI26038"/>
    </conflict>
    <text>Truncated C-terminus.</text>
</comment>
<feature type="chain" id="PRO_0000363221" description="Septin-2A">
    <location>
        <begin position="1"/>
        <end position="356"/>
    </location>
</feature>
<feature type="domain" description="Septin-type G" evidence="2">
    <location>
        <begin position="33"/>
        <end position="305"/>
    </location>
</feature>
<feature type="region of interest" description="G1 motif" evidence="2">
    <location>
        <begin position="43"/>
        <end position="50"/>
    </location>
</feature>
<feature type="region of interest" description="G3 motif" evidence="2">
    <location>
        <begin position="100"/>
        <end position="103"/>
    </location>
</feature>
<feature type="region of interest" description="G4 motif" evidence="2">
    <location>
        <begin position="181"/>
        <end position="184"/>
    </location>
</feature>
<feature type="region of interest" description="Important for dimerization" evidence="1">
    <location>
        <begin position="259"/>
        <end position="269"/>
    </location>
</feature>
<feature type="binding site" evidence="1">
    <location>
        <begin position="43"/>
        <end position="50"/>
    </location>
    <ligand>
        <name>GTP</name>
        <dbReference type="ChEBI" id="CHEBI:37565"/>
    </ligand>
</feature>
<feature type="binding site" evidence="1">
    <location>
        <position position="77"/>
    </location>
    <ligand>
        <name>GTP</name>
        <dbReference type="ChEBI" id="CHEBI:37565"/>
    </ligand>
</feature>
<feature type="binding site" evidence="1">
    <location>
        <position position="103"/>
    </location>
    <ligand>
        <name>GTP</name>
        <dbReference type="ChEBI" id="CHEBI:37565"/>
    </ligand>
</feature>
<feature type="binding site" evidence="1">
    <location>
        <begin position="182"/>
        <end position="190"/>
    </location>
    <ligand>
        <name>GTP</name>
        <dbReference type="ChEBI" id="CHEBI:37565"/>
    </ligand>
</feature>
<feature type="binding site" evidence="1">
    <location>
        <position position="240"/>
    </location>
    <ligand>
        <name>GTP</name>
        <dbReference type="ChEBI" id="CHEBI:37565"/>
    </ligand>
</feature>
<feature type="binding site" evidence="1">
    <location>
        <position position="255"/>
    </location>
    <ligand>
        <name>GTP</name>
        <dbReference type="ChEBI" id="CHEBI:37565"/>
    </ligand>
</feature>
<feature type="site" description="Important for dimerization" evidence="1">
    <location>
        <position position="155"/>
    </location>
</feature>